<keyword id="KW-0963">Cytoplasm</keyword>
<keyword id="KW-0378">Hydrolase</keyword>
<keyword id="KW-0645">Protease</keyword>
<keyword id="KW-1185">Reference proteome</keyword>
<keyword id="KW-0720">Serine protease</keyword>
<proteinExistence type="inferred from homology"/>
<name>CLPP_ENTFA</name>
<evidence type="ECO:0000255" key="1">
    <source>
        <dbReference type="HAMAP-Rule" id="MF_00444"/>
    </source>
</evidence>
<protein>
    <recommendedName>
        <fullName evidence="1">ATP-dependent Clp protease proteolytic subunit</fullName>
        <ecNumber evidence="1">3.4.21.92</ecNumber>
    </recommendedName>
    <alternativeName>
        <fullName evidence="1">Endopeptidase Clp</fullName>
    </alternativeName>
</protein>
<feature type="chain" id="PRO_0000179554" description="ATP-dependent Clp protease proteolytic subunit">
    <location>
        <begin position="1"/>
        <end position="197"/>
    </location>
</feature>
<feature type="active site" description="Nucleophile" evidence="1">
    <location>
        <position position="98"/>
    </location>
</feature>
<feature type="active site" evidence="1">
    <location>
        <position position="123"/>
    </location>
</feature>
<accession>Q837R0</accession>
<organism>
    <name type="scientific">Enterococcus faecalis (strain ATCC 700802 / V583)</name>
    <dbReference type="NCBI Taxonomy" id="226185"/>
    <lineage>
        <taxon>Bacteria</taxon>
        <taxon>Bacillati</taxon>
        <taxon>Bacillota</taxon>
        <taxon>Bacilli</taxon>
        <taxon>Lactobacillales</taxon>
        <taxon>Enterococcaceae</taxon>
        <taxon>Enterococcus</taxon>
    </lineage>
</organism>
<gene>
    <name evidence="1" type="primary">clpP</name>
    <name type="ordered locus">EF_0771</name>
</gene>
<comment type="function">
    <text evidence="1">Cleaves peptides in various proteins in a process that requires ATP hydrolysis. Has a chymotrypsin-like activity. Plays a major role in the degradation of misfolded proteins.</text>
</comment>
<comment type="catalytic activity">
    <reaction evidence="1">
        <text>Hydrolysis of proteins to small peptides in the presence of ATP and magnesium. alpha-casein is the usual test substrate. In the absence of ATP, only oligopeptides shorter than five residues are hydrolyzed (such as succinyl-Leu-Tyr-|-NHMec, and Leu-Tyr-Leu-|-Tyr-Trp, in which cleavage of the -Tyr-|-Leu- and -Tyr-|-Trp bonds also occurs).</text>
        <dbReference type="EC" id="3.4.21.92"/>
    </reaction>
</comment>
<comment type="subunit">
    <text evidence="1">Fourteen ClpP subunits assemble into 2 heptameric rings which stack back to back to give a disk-like structure with a central cavity, resembling the structure of eukaryotic proteasomes.</text>
</comment>
<comment type="subcellular location">
    <subcellularLocation>
        <location evidence="1">Cytoplasm</location>
    </subcellularLocation>
</comment>
<comment type="similarity">
    <text evidence="1">Belongs to the peptidase S14 family.</text>
</comment>
<reference key="1">
    <citation type="journal article" date="2003" name="Science">
        <title>Role of mobile DNA in the evolution of vancomycin-resistant Enterococcus faecalis.</title>
        <authorList>
            <person name="Paulsen I.T."/>
            <person name="Banerjei L."/>
            <person name="Myers G.S.A."/>
            <person name="Nelson K.E."/>
            <person name="Seshadri R."/>
            <person name="Read T.D."/>
            <person name="Fouts D.E."/>
            <person name="Eisen J.A."/>
            <person name="Gill S.R."/>
            <person name="Heidelberg J.F."/>
            <person name="Tettelin H."/>
            <person name="Dodson R.J."/>
            <person name="Umayam L.A."/>
            <person name="Brinkac L.M."/>
            <person name="Beanan M.J."/>
            <person name="Daugherty S.C."/>
            <person name="DeBoy R.T."/>
            <person name="Durkin S.A."/>
            <person name="Kolonay J.F."/>
            <person name="Madupu R."/>
            <person name="Nelson W.C."/>
            <person name="Vamathevan J.J."/>
            <person name="Tran B."/>
            <person name="Upton J."/>
            <person name="Hansen T."/>
            <person name="Shetty J."/>
            <person name="Khouri H.M."/>
            <person name="Utterback T.R."/>
            <person name="Radune D."/>
            <person name="Ketchum K.A."/>
            <person name="Dougherty B.A."/>
            <person name="Fraser C.M."/>
        </authorList>
    </citation>
    <scope>NUCLEOTIDE SEQUENCE [LARGE SCALE GENOMIC DNA]</scope>
    <source>
        <strain>ATCC 700802 / V583</strain>
    </source>
</reference>
<dbReference type="EC" id="3.4.21.92" evidence="1"/>
<dbReference type="EMBL" id="AE016830">
    <property type="protein sequence ID" value="AAO80588.1"/>
    <property type="molecule type" value="Genomic_DNA"/>
</dbReference>
<dbReference type="RefSeq" id="NP_814518.1">
    <property type="nucleotide sequence ID" value="NC_004668.1"/>
</dbReference>
<dbReference type="RefSeq" id="WP_002355633.1">
    <property type="nucleotide sequence ID" value="NZ_KE136527.1"/>
</dbReference>
<dbReference type="SMR" id="Q837R0"/>
<dbReference type="STRING" id="226185.EF_0771"/>
<dbReference type="MEROPS" id="S14.001"/>
<dbReference type="EnsemblBacteria" id="AAO80588">
    <property type="protein sequence ID" value="AAO80588"/>
    <property type="gene ID" value="EF_0771"/>
</dbReference>
<dbReference type="GeneID" id="60893063"/>
<dbReference type="KEGG" id="efa:EF0771"/>
<dbReference type="PATRIC" id="fig|226185.45.peg.2711"/>
<dbReference type="eggNOG" id="COG0740">
    <property type="taxonomic scope" value="Bacteria"/>
</dbReference>
<dbReference type="HOGENOM" id="CLU_058707_3_2_9"/>
<dbReference type="Proteomes" id="UP000001415">
    <property type="component" value="Chromosome"/>
</dbReference>
<dbReference type="GO" id="GO:0005737">
    <property type="term" value="C:cytoplasm"/>
    <property type="evidence" value="ECO:0007669"/>
    <property type="project" value="UniProtKB-SubCell"/>
</dbReference>
<dbReference type="GO" id="GO:0009368">
    <property type="term" value="C:endopeptidase Clp complex"/>
    <property type="evidence" value="ECO:0007669"/>
    <property type="project" value="TreeGrafter"/>
</dbReference>
<dbReference type="GO" id="GO:0004176">
    <property type="term" value="F:ATP-dependent peptidase activity"/>
    <property type="evidence" value="ECO:0007669"/>
    <property type="project" value="InterPro"/>
</dbReference>
<dbReference type="GO" id="GO:0051117">
    <property type="term" value="F:ATPase binding"/>
    <property type="evidence" value="ECO:0007669"/>
    <property type="project" value="TreeGrafter"/>
</dbReference>
<dbReference type="GO" id="GO:0004252">
    <property type="term" value="F:serine-type endopeptidase activity"/>
    <property type="evidence" value="ECO:0007669"/>
    <property type="project" value="UniProtKB-UniRule"/>
</dbReference>
<dbReference type="GO" id="GO:0006515">
    <property type="term" value="P:protein quality control for misfolded or incompletely synthesized proteins"/>
    <property type="evidence" value="ECO:0007669"/>
    <property type="project" value="TreeGrafter"/>
</dbReference>
<dbReference type="CDD" id="cd07017">
    <property type="entry name" value="S14_ClpP_2"/>
    <property type="match status" value="1"/>
</dbReference>
<dbReference type="FunFam" id="3.90.226.10:FF:000001">
    <property type="entry name" value="ATP-dependent Clp protease proteolytic subunit"/>
    <property type="match status" value="1"/>
</dbReference>
<dbReference type="Gene3D" id="3.90.226.10">
    <property type="entry name" value="2-enoyl-CoA Hydratase, Chain A, domain 1"/>
    <property type="match status" value="1"/>
</dbReference>
<dbReference type="HAMAP" id="MF_00444">
    <property type="entry name" value="ClpP"/>
    <property type="match status" value="1"/>
</dbReference>
<dbReference type="InterPro" id="IPR001907">
    <property type="entry name" value="ClpP"/>
</dbReference>
<dbReference type="InterPro" id="IPR029045">
    <property type="entry name" value="ClpP/crotonase-like_dom_sf"/>
</dbReference>
<dbReference type="InterPro" id="IPR023562">
    <property type="entry name" value="ClpP/TepA"/>
</dbReference>
<dbReference type="InterPro" id="IPR033135">
    <property type="entry name" value="ClpP_His_AS"/>
</dbReference>
<dbReference type="InterPro" id="IPR018215">
    <property type="entry name" value="ClpP_Ser_AS"/>
</dbReference>
<dbReference type="NCBIfam" id="TIGR00493">
    <property type="entry name" value="clpP"/>
    <property type="match status" value="1"/>
</dbReference>
<dbReference type="NCBIfam" id="NF001368">
    <property type="entry name" value="PRK00277.1"/>
    <property type="match status" value="1"/>
</dbReference>
<dbReference type="NCBIfam" id="NF009205">
    <property type="entry name" value="PRK12553.1"/>
    <property type="match status" value="1"/>
</dbReference>
<dbReference type="PANTHER" id="PTHR10381">
    <property type="entry name" value="ATP-DEPENDENT CLP PROTEASE PROTEOLYTIC SUBUNIT"/>
    <property type="match status" value="1"/>
</dbReference>
<dbReference type="PANTHER" id="PTHR10381:SF70">
    <property type="entry name" value="ATP-DEPENDENT CLP PROTEASE PROTEOLYTIC SUBUNIT"/>
    <property type="match status" value="1"/>
</dbReference>
<dbReference type="Pfam" id="PF00574">
    <property type="entry name" value="CLP_protease"/>
    <property type="match status" value="1"/>
</dbReference>
<dbReference type="PRINTS" id="PR00127">
    <property type="entry name" value="CLPPROTEASEP"/>
</dbReference>
<dbReference type="SUPFAM" id="SSF52096">
    <property type="entry name" value="ClpP/crotonase"/>
    <property type="match status" value="1"/>
</dbReference>
<dbReference type="PROSITE" id="PS00382">
    <property type="entry name" value="CLP_PROTEASE_HIS"/>
    <property type="match status" value="1"/>
</dbReference>
<dbReference type="PROSITE" id="PS00381">
    <property type="entry name" value="CLP_PROTEASE_SER"/>
    <property type="match status" value="1"/>
</dbReference>
<sequence length="197" mass="21622">MNLIPTVIEQSSRGERAYDIYSRLLKDRIIMLSGPIDDNVANSVIAQLLFLDAQDSEKDIYLYINSPGGSVSAGLAIFDTMNFVKADVQTIVLGMAASMGSFLLTAGQKGKRFALPNAEIMIHQPLGGAQGQATEIEIAARHILDTRQRLNSILAERTGQPIEVIERDTDRDNYMTAEQAKEYGLIDEVMENSSALN</sequence>